<feature type="chain" id="PRO_1000128405" description="Small ribosomal subunit protein uS14">
    <location>
        <begin position="1"/>
        <end position="89"/>
    </location>
</feature>
<name>RS14_FLAPJ</name>
<reference key="1">
    <citation type="journal article" date="2007" name="Nat. Biotechnol.">
        <title>Complete genome sequence of the fish pathogen Flavobacterium psychrophilum.</title>
        <authorList>
            <person name="Duchaud E."/>
            <person name="Boussaha M."/>
            <person name="Loux V."/>
            <person name="Bernardet J.-F."/>
            <person name="Michel C."/>
            <person name="Kerouault B."/>
            <person name="Mondot S."/>
            <person name="Nicolas P."/>
            <person name="Bossy R."/>
            <person name="Caron C."/>
            <person name="Bessieres P."/>
            <person name="Gibrat J.-F."/>
            <person name="Claverol S."/>
            <person name="Dumetz F."/>
            <person name="Le Henaff M."/>
            <person name="Benmansour A."/>
        </authorList>
    </citation>
    <scope>NUCLEOTIDE SEQUENCE [LARGE SCALE GENOMIC DNA]</scope>
    <source>
        <strain>ATCC 49511 / DSM 21280 / CIP 103535 / JIP02/86</strain>
    </source>
</reference>
<gene>
    <name evidence="1" type="primary">rpsN</name>
    <name type="ordered locus">FP1326</name>
</gene>
<evidence type="ECO:0000255" key="1">
    <source>
        <dbReference type="HAMAP-Rule" id="MF_00537"/>
    </source>
</evidence>
<evidence type="ECO:0000305" key="2"/>
<sequence>MAKESMKAREVKRENTVAKYAEKRKALKEAGDFVGLQKLPKNASPVRMHNRCKLTGRPRGYMRQFGISRVTFREMANNGLIPGVKKASW</sequence>
<comment type="function">
    <text evidence="1">Binds 16S rRNA, required for the assembly of 30S particles and may also be responsible for determining the conformation of the 16S rRNA at the A site.</text>
</comment>
<comment type="subunit">
    <text evidence="1">Part of the 30S ribosomal subunit. Contacts proteins S3 and S10.</text>
</comment>
<comment type="similarity">
    <text evidence="1">Belongs to the universal ribosomal protein uS14 family.</text>
</comment>
<accession>A6GZ86</accession>
<proteinExistence type="inferred from homology"/>
<organism>
    <name type="scientific">Flavobacterium psychrophilum (strain ATCC 49511 / DSM 21280 / CIP 103535 / JIP02/86)</name>
    <dbReference type="NCBI Taxonomy" id="402612"/>
    <lineage>
        <taxon>Bacteria</taxon>
        <taxon>Pseudomonadati</taxon>
        <taxon>Bacteroidota</taxon>
        <taxon>Flavobacteriia</taxon>
        <taxon>Flavobacteriales</taxon>
        <taxon>Flavobacteriaceae</taxon>
        <taxon>Flavobacterium</taxon>
    </lineage>
</organism>
<protein>
    <recommendedName>
        <fullName evidence="1">Small ribosomal subunit protein uS14</fullName>
    </recommendedName>
    <alternativeName>
        <fullName evidence="2">30S ribosomal protein S14</fullName>
    </alternativeName>
</protein>
<keyword id="KW-1185">Reference proteome</keyword>
<keyword id="KW-0687">Ribonucleoprotein</keyword>
<keyword id="KW-0689">Ribosomal protein</keyword>
<keyword id="KW-0694">RNA-binding</keyword>
<keyword id="KW-0699">rRNA-binding</keyword>
<dbReference type="EMBL" id="AM398681">
    <property type="protein sequence ID" value="CAL43409.1"/>
    <property type="molecule type" value="Genomic_DNA"/>
</dbReference>
<dbReference type="RefSeq" id="WP_011963457.1">
    <property type="nucleotide sequence ID" value="NC_009613.3"/>
</dbReference>
<dbReference type="RefSeq" id="YP_001296220.1">
    <property type="nucleotide sequence ID" value="NC_009613.3"/>
</dbReference>
<dbReference type="SMR" id="A6GZ86"/>
<dbReference type="STRING" id="402612.FP1326"/>
<dbReference type="EnsemblBacteria" id="CAL43409">
    <property type="protein sequence ID" value="CAL43409"/>
    <property type="gene ID" value="FP1326"/>
</dbReference>
<dbReference type="GeneID" id="66553229"/>
<dbReference type="KEGG" id="fps:FP1326"/>
<dbReference type="PATRIC" id="fig|402612.5.peg.1343"/>
<dbReference type="eggNOG" id="COG0199">
    <property type="taxonomic scope" value="Bacteria"/>
</dbReference>
<dbReference type="HOGENOM" id="CLU_139869_0_0_10"/>
<dbReference type="OrthoDB" id="9810484at2"/>
<dbReference type="Proteomes" id="UP000006394">
    <property type="component" value="Chromosome"/>
</dbReference>
<dbReference type="GO" id="GO:0005737">
    <property type="term" value="C:cytoplasm"/>
    <property type="evidence" value="ECO:0007669"/>
    <property type="project" value="UniProtKB-ARBA"/>
</dbReference>
<dbReference type="GO" id="GO:0015935">
    <property type="term" value="C:small ribosomal subunit"/>
    <property type="evidence" value="ECO:0007669"/>
    <property type="project" value="TreeGrafter"/>
</dbReference>
<dbReference type="GO" id="GO:0019843">
    <property type="term" value="F:rRNA binding"/>
    <property type="evidence" value="ECO:0007669"/>
    <property type="project" value="UniProtKB-UniRule"/>
</dbReference>
<dbReference type="GO" id="GO:0003735">
    <property type="term" value="F:structural constituent of ribosome"/>
    <property type="evidence" value="ECO:0007669"/>
    <property type="project" value="InterPro"/>
</dbReference>
<dbReference type="GO" id="GO:0006412">
    <property type="term" value="P:translation"/>
    <property type="evidence" value="ECO:0007669"/>
    <property type="project" value="UniProtKB-UniRule"/>
</dbReference>
<dbReference type="Gene3D" id="4.10.830.10">
    <property type="entry name" value="30s Ribosomal Protein S14, Chain N"/>
    <property type="match status" value="1"/>
</dbReference>
<dbReference type="HAMAP" id="MF_00537">
    <property type="entry name" value="Ribosomal_uS14_1"/>
    <property type="match status" value="1"/>
</dbReference>
<dbReference type="InterPro" id="IPR001209">
    <property type="entry name" value="Ribosomal_uS14"/>
</dbReference>
<dbReference type="InterPro" id="IPR023036">
    <property type="entry name" value="Ribosomal_uS14_bac/plastid"/>
</dbReference>
<dbReference type="InterPro" id="IPR018271">
    <property type="entry name" value="Ribosomal_uS14_CS"/>
</dbReference>
<dbReference type="InterPro" id="IPR043140">
    <property type="entry name" value="Ribosomal_uS14_sf"/>
</dbReference>
<dbReference type="NCBIfam" id="NF006477">
    <property type="entry name" value="PRK08881.1"/>
    <property type="match status" value="1"/>
</dbReference>
<dbReference type="PANTHER" id="PTHR19836">
    <property type="entry name" value="30S RIBOSOMAL PROTEIN S14"/>
    <property type="match status" value="1"/>
</dbReference>
<dbReference type="PANTHER" id="PTHR19836:SF19">
    <property type="entry name" value="SMALL RIBOSOMAL SUBUNIT PROTEIN US14M"/>
    <property type="match status" value="1"/>
</dbReference>
<dbReference type="Pfam" id="PF00253">
    <property type="entry name" value="Ribosomal_S14"/>
    <property type="match status" value="1"/>
</dbReference>
<dbReference type="SUPFAM" id="SSF57716">
    <property type="entry name" value="Glucocorticoid receptor-like (DNA-binding domain)"/>
    <property type="match status" value="1"/>
</dbReference>
<dbReference type="PROSITE" id="PS00527">
    <property type="entry name" value="RIBOSOMAL_S14"/>
    <property type="match status" value="1"/>
</dbReference>